<organism>
    <name type="scientific">Rattus norvegicus</name>
    <name type="common">Rat</name>
    <dbReference type="NCBI Taxonomy" id="10116"/>
    <lineage>
        <taxon>Eukaryota</taxon>
        <taxon>Metazoa</taxon>
        <taxon>Chordata</taxon>
        <taxon>Craniata</taxon>
        <taxon>Vertebrata</taxon>
        <taxon>Euteleostomi</taxon>
        <taxon>Mammalia</taxon>
        <taxon>Eutheria</taxon>
        <taxon>Euarchontoglires</taxon>
        <taxon>Glires</taxon>
        <taxon>Rodentia</taxon>
        <taxon>Myomorpha</taxon>
        <taxon>Muroidea</taxon>
        <taxon>Muridae</taxon>
        <taxon>Murinae</taxon>
        <taxon>Rattus</taxon>
    </lineage>
</organism>
<evidence type="ECO:0000250" key="1"/>
<evidence type="ECO:0000250" key="2">
    <source>
        <dbReference type="UniProtKB" id="P07313"/>
    </source>
</evidence>
<evidence type="ECO:0000250" key="3">
    <source>
        <dbReference type="UniProtKB" id="Q8VCR8"/>
    </source>
</evidence>
<evidence type="ECO:0000255" key="4">
    <source>
        <dbReference type="PROSITE-ProRule" id="PRU00159"/>
    </source>
</evidence>
<evidence type="ECO:0000255" key="5">
    <source>
        <dbReference type="PROSITE-ProRule" id="PRU10027"/>
    </source>
</evidence>
<evidence type="ECO:0000256" key="6">
    <source>
        <dbReference type="SAM" id="MobiDB-lite"/>
    </source>
</evidence>
<evidence type="ECO:0000303" key="7">
    <source>
    </source>
</evidence>
<evidence type="ECO:0000305" key="8"/>
<evidence type="ECO:0000305" key="9">
    <source>
    </source>
</evidence>
<evidence type="ECO:0007744" key="10">
    <source>
    </source>
</evidence>
<sequence>MATENGAVELGTQSLSTDHPPTDAAGDGSPASEKEPSLPDTEKDLGPTNTKKDPGAPDPKKNPDPPSLKKTPEAPGPEKKGDSAPASASNQGPSGEGDGGGGPAEGGTGPPAVLPQPTATADASIQKLDATQAPSGNQESGEAKAGKKAAECREAGRRGSPAFLHSPSCPAIISCSEKTLAMKPLSETTELIFAGVSETPDPQDPGPAKDEGGTNTLADGKEEAEAGQAEQAKVQGDTSQRIGFQAVPSERAEVGQALCLTAKEEDCFQILDDCPPPPAPFPHRIVELRTGNVSSEFSMNSKEALGGGKFGAVCTCTERSTGLKLAAKVIKKQTPKDKEMVLLEIEVMNQLNHRNLIQLYSAIETSHEIILFMEYIEGGELFERIVDEDYQLTEVDTMVFVRQICDGILFMHKMRVLHLDLKPENILCVNTTGHLVKIIDFGLARRYNPNEKLKVNFGTPEFLSPEVVNYDQISDKTDMWSLGVITYMLLSGLSPFLGDDDTETLNNVLSANWYFDEETFEAVSDEAKDFVSNLITKDQSARMSAEQCLAHPWLNNLAEKAKRCNRRLKSQILLKKYLMKRRWKKNFIAVSAANRFKKISSSGALMALGV</sequence>
<name>MYLK2_RAT</name>
<proteinExistence type="evidence at protein level"/>
<accession>P20689</accession>
<dbReference type="EC" id="2.7.11.18" evidence="9"/>
<dbReference type="EMBL" id="J03886">
    <property type="protein sequence ID" value="AAA41625.1"/>
    <property type="status" value="ALT_SEQ"/>
    <property type="molecule type" value="mRNA"/>
</dbReference>
<dbReference type="PIR" id="A28798">
    <property type="entry name" value="A28798"/>
</dbReference>
<dbReference type="RefSeq" id="NP_476557.1">
    <property type="nucleotide sequence ID" value="NM_057209.1"/>
</dbReference>
<dbReference type="BMRB" id="P20689"/>
<dbReference type="SMR" id="P20689"/>
<dbReference type="FunCoup" id="P20689">
    <property type="interactions" value="552"/>
</dbReference>
<dbReference type="IntAct" id="P20689">
    <property type="interactions" value="2"/>
</dbReference>
<dbReference type="MINT" id="P20689"/>
<dbReference type="STRING" id="10116.ENSRNOP00000011255"/>
<dbReference type="iPTMnet" id="P20689"/>
<dbReference type="PhosphoSitePlus" id="P20689"/>
<dbReference type="jPOST" id="P20689"/>
<dbReference type="PaxDb" id="10116-ENSRNOP00000011255"/>
<dbReference type="DNASU" id="117558"/>
<dbReference type="GeneID" id="117558"/>
<dbReference type="KEGG" id="rno:117558"/>
<dbReference type="UCSC" id="RGD:620934">
    <property type="organism name" value="rat"/>
</dbReference>
<dbReference type="AGR" id="RGD:620934"/>
<dbReference type="CTD" id="85366"/>
<dbReference type="RGD" id="620934">
    <property type="gene designation" value="Mylk2"/>
</dbReference>
<dbReference type="eggNOG" id="KOG0032">
    <property type="taxonomic scope" value="Eukaryota"/>
</dbReference>
<dbReference type="InParanoid" id="P20689"/>
<dbReference type="PhylomeDB" id="P20689"/>
<dbReference type="BRENDA" id="2.7.11.18">
    <property type="organism ID" value="5301"/>
</dbReference>
<dbReference type="PRO" id="PR:P20689"/>
<dbReference type="Proteomes" id="UP000002494">
    <property type="component" value="Unplaced"/>
</dbReference>
<dbReference type="GO" id="GO:0005737">
    <property type="term" value="C:cytoplasm"/>
    <property type="evidence" value="ECO:0000266"/>
    <property type="project" value="RGD"/>
</dbReference>
<dbReference type="GO" id="GO:0030425">
    <property type="term" value="C:dendrite"/>
    <property type="evidence" value="ECO:0000314"/>
    <property type="project" value="RGD"/>
</dbReference>
<dbReference type="GO" id="GO:0043197">
    <property type="term" value="C:dendritic spine"/>
    <property type="evidence" value="ECO:0000314"/>
    <property type="project" value="RGD"/>
</dbReference>
<dbReference type="GO" id="GO:0043025">
    <property type="term" value="C:neuronal cell body"/>
    <property type="evidence" value="ECO:0000314"/>
    <property type="project" value="RGD"/>
</dbReference>
<dbReference type="GO" id="GO:0005634">
    <property type="term" value="C:nucleus"/>
    <property type="evidence" value="ECO:0000266"/>
    <property type="project" value="RGD"/>
</dbReference>
<dbReference type="GO" id="GO:0008021">
    <property type="term" value="C:synaptic vesicle"/>
    <property type="evidence" value="ECO:0000314"/>
    <property type="project" value="RGD"/>
</dbReference>
<dbReference type="GO" id="GO:0043195">
    <property type="term" value="C:terminal bouton"/>
    <property type="evidence" value="ECO:0000314"/>
    <property type="project" value="RGD"/>
</dbReference>
<dbReference type="GO" id="GO:0005524">
    <property type="term" value="F:ATP binding"/>
    <property type="evidence" value="ECO:0007669"/>
    <property type="project" value="UniProtKB-KW"/>
</dbReference>
<dbReference type="GO" id="GO:0005516">
    <property type="term" value="F:calmodulin binding"/>
    <property type="evidence" value="ECO:0007669"/>
    <property type="project" value="UniProtKB-KW"/>
</dbReference>
<dbReference type="GO" id="GO:0032027">
    <property type="term" value="F:myosin light chain binding"/>
    <property type="evidence" value="ECO:0000315"/>
    <property type="project" value="RGD"/>
</dbReference>
<dbReference type="GO" id="GO:0004687">
    <property type="term" value="F:myosin light chain kinase activity"/>
    <property type="evidence" value="ECO:0000314"/>
    <property type="project" value="RGD"/>
</dbReference>
<dbReference type="GO" id="GO:0055008">
    <property type="term" value="P:cardiac muscle tissue morphogenesis"/>
    <property type="evidence" value="ECO:0000266"/>
    <property type="project" value="RGD"/>
</dbReference>
<dbReference type="GO" id="GO:0006936">
    <property type="term" value="P:muscle contraction"/>
    <property type="evidence" value="ECO:0000270"/>
    <property type="project" value="RGD"/>
</dbReference>
<dbReference type="GO" id="GO:0007274">
    <property type="term" value="P:neuromuscular synaptic transmission"/>
    <property type="evidence" value="ECO:0000266"/>
    <property type="project" value="RGD"/>
</dbReference>
<dbReference type="GO" id="GO:0031448">
    <property type="term" value="P:positive regulation of fast-twitch skeletal muscle fiber contraction"/>
    <property type="evidence" value="ECO:0000315"/>
    <property type="project" value="RGD"/>
</dbReference>
<dbReference type="GO" id="GO:0010628">
    <property type="term" value="P:positive regulation of gene expression"/>
    <property type="evidence" value="ECO:0000266"/>
    <property type="project" value="RGD"/>
</dbReference>
<dbReference type="GO" id="GO:0043408">
    <property type="term" value="P:regulation of MAPK cascade"/>
    <property type="evidence" value="ECO:0000315"/>
    <property type="project" value="RGD"/>
</dbReference>
<dbReference type="GO" id="GO:0032971">
    <property type="term" value="P:regulation of muscle filament sliding"/>
    <property type="evidence" value="ECO:0000266"/>
    <property type="project" value="RGD"/>
</dbReference>
<dbReference type="GO" id="GO:0048168">
    <property type="term" value="P:regulation of neuronal synaptic plasticity"/>
    <property type="evidence" value="ECO:0000315"/>
    <property type="project" value="RGD"/>
</dbReference>
<dbReference type="GO" id="GO:0007165">
    <property type="term" value="P:signal transduction"/>
    <property type="evidence" value="ECO:0000318"/>
    <property type="project" value="GO_Central"/>
</dbReference>
<dbReference type="GO" id="GO:0035914">
    <property type="term" value="P:skeletal muscle cell differentiation"/>
    <property type="evidence" value="ECO:0000266"/>
    <property type="project" value="RGD"/>
</dbReference>
<dbReference type="GO" id="GO:0014816">
    <property type="term" value="P:skeletal muscle satellite cell differentiation"/>
    <property type="evidence" value="ECO:0000266"/>
    <property type="project" value="RGD"/>
</dbReference>
<dbReference type="GO" id="GO:0006941">
    <property type="term" value="P:striated muscle contraction"/>
    <property type="evidence" value="ECO:0000266"/>
    <property type="project" value="RGD"/>
</dbReference>
<dbReference type="GO" id="GO:0048489">
    <property type="term" value="P:synaptic vesicle transport"/>
    <property type="evidence" value="ECO:0000315"/>
    <property type="project" value="RGD"/>
</dbReference>
<dbReference type="GO" id="GO:0006833">
    <property type="term" value="P:water transport"/>
    <property type="evidence" value="ECO:0000315"/>
    <property type="project" value="RGD"/>
</dbReference>
<dbReference type="CDD" id="cd14190">
    <property type="entry name" value="STKc_MLCK2"/>
    <property type="match status" value="1"/>
</dbReference>
<dbReference type="FunFam" id="3.30.200.20:FF:000359">
    <property type="entry name" value="myosin light chain kinase 2, skeletal/cardiac muscle"/>
    <property type="match status" value="1"/>
</dbReference>
<dbReference type="FunFam" id="1.10.510.10:FF:000135">
    <property type="entry name" value="Putative myosin light chain kinase 3"/>
    <property type="match status" value="1"/>
</dbReference>
<dbReference type="Gene3D" id="3.30.200.20">
    <property type="entry name" value="Phosphorylase Kinase, domain 1"/>
    <property type="match status" value="1"/>
</dbReference>
<dbReference type="Gene3D" id="1.10.510.10">
    <property type="entry name" value="Transferase(Phosphotransferase) domain 1"/>
    <property type="match status" value="1"/>
</dbReference>
<dbReference type="InterPro" id="IPR011009">
    <property type="entry name" value="Kinase-like_dom_sf"/>
</dbReference>
<dbReference type="InterPro" id="IPR042717">
    <property type="entry name" value="MLCK2_STKc"/>
</dbReference>
<dbReference type="InterPro" id="IPR000719">
    <property type="entry name" value="Prot_kinase_dom"/>
</dbReference>
<dbReference type="InterPro" id="IPR017441">
    <property type="entry name" value="Protein_kinase_ATP_BS"/>
</dbReference>
<dbReference type="InterPro" id="IPR008271">
    <property type="entry name" value="Ser/Thr_kinase_AS"/>
</dbReference>
<dbReference type="PANTHER" id="PTHR24347">
    <property type="entry name" value="SERINE/THREONINE-PROTEIN KINASE"/>
    <property type="match status" value="1"/>
</dbReference>
<dbReference type="Pfam" id="PF00069">
    <property type="entry name" value="Pkinase"/>
    <property type="match status" value="1"/>
</dbReference>
<dbReference type="SMART" id="SM00220">
    <property type="entry name" value="S_TKc"/>
    <property type="match status" value="1"/>
</dbReference>
<dbReference type="SUPFAM" id="SSF56112">
    <property type="entry name" value="Protein kinase-like (PK-like)"/>
    <property type="match status" value="1"/>
</dbReference>
<dbReference type="PROSITE" id="PS00107">
    <property type="entry name" value="PROTEIN_KINASE_ATP"/>
    <property type="match status" value="1"/>
</dbReference>
<dbReference type="PROSITE" id="PS50011">
    <property type="entry name" value="PROTEIN_KINASE_DOM"/>
    <property type="match status" value="1"/>
</dbReference>
<dbReference type="PROSITE" id="PS00108">
    <property type="entry name" value="PROTEIN_KINASE_ST"/>
    <property type="match status" value="1"/>
</dbReference>
<feature type="initiator methionine" description="Removed" evidence="2">
    <location>
        <position position="1"/>
    </location>
</feature>
<feature type="chain" id="PRO_0000086411" description="Myosin light chain kinase 2, skeletal/cardiac muscle">
    <location>
        <begin position="2"/>
        <end position="610"/>
    </location>
</feature>
<feature type="domain" description="Protein kinase" evidence="4">
    <location>
        <begin position="299"/>
        <end position="554"/>
    </location>
</feature>
<feature type="region of interest" description="Disordered" evidence="6">
    <location>
        <begin position="1"/>
        <end position="168"/>
    </location>
</feature>
<feature type="region of interest" description="Disordered" evidence="6">
    <location>
        <begin position="196"/>
        <end position="240"/>
    </location>
</feature>
<feature type="region of interest" description="Calmodulin-binding" evidence="1">
    <location>
        <begin position="588"/>
        <end position="600"/>
    </location>
</feature>
<feature type="compositionally biased region" description="Basic and acidic residues" evidence="6">
    <location>
        <begin position="32"/>
        <end position="63"/>
    </location>
</feature>
<feature type="compositionally biased region" description="Basic and acidic residues" evidence="6">
    <location>
        <begin position="70"/>
        <end position="82"/>
    </location>
</feature>
<feature type="compositionally biased region" description="Gly residues" evidence="6">
    <location>
        <begin position="94"/>
        <end position="109"/>
    </location>
</feature>
<feature type="compositionally biased region" description="Basic and acidic residues" evidence="6">
    <location>
        <begin position="141"/>
        <end position="157"/>
    </location>
</feature>
<feature type="active site" description="Proton acceptor" evidence="4 5">
    <location>
        <position position="420"/>
    </location>
</feature>
<feature type="binding site" evidence="4">
    <location>
        <begin position="305"/>
        <end position="313"/>
    </location>
    <ligand>
        <name>ATP</name>
        <dbReference type="ChEBI" id="CHEBI:30616"/>
    </ligand>
</feature>
<feature type="binding site" evidence="4">
    <location>
        <position position="328"/>
    </location>
    <ligand>
        <name>ATP</name>
        <dbReference type="ChEBI" id="CHEBI:30616"/>
    </ligand>
</feature>
<feature type="modified residue" description="N-acetylalanine" evidence="2">
    <location>
        <position position="2"/>
    </location>
</feature>
<feature type="modified residue" description="Phosphoserine" evidence="3">
    <location>
        <position position="160"/>
    </location>
</feature>
<feature type="modified residue" description="Phosphoserine" evidence="3">
    <location>
        <position position="166"/>
    </location>
</feature>
<feature type="modified residue" description="Phosphoserine" evidence="3">
    <location>
        <position position="168"/>
    </location>
</feature>
<feature type="modified residue" description="Phosphothreonine" evidence="10">
    <location>
        <position position="459"/>
    </location>
</feature>
<protein>
    <recommendedName>
        <fullName>Myosin light chain kinase 2, skeletal/cardiac muscle</fullName>
        <shortName evidence="7">MLCK2</shortName>
        <ecNumber evidence="9">2.7.11.18</ecNumber>
    </recommendedName>
</protein>
<keyword id="KW-0007">Acetylation</keyword>
<keyword id="KW-0067">ATP-binding</keyword>
<keyword id="KW-0112">Calmodulin-binding</keyword>
<keyword id="KW-0963">Cytoplasm</keyword>
<keyword id="KW-0418">Kinase</keyword>
<keyword id="KW-0547">Nucleotide-binding</keyword>
<keyword id="KW-0597">Phosphoprotein</keyword>
<keyword id="KW-1185">Reference proteome</keyword>
<keyword id="KW-0723">Serine/threonine-protein kinase</keyword>
<keyword id="KW-0808">Transferase</keyword>
<comment type="function">
    <text evidence="1">Implicated in the level of global muscle contraction and cardiac function (By similarity). Phosphorylates a specific serine in the N-terminus of a myosin light chain.</text>
</comment>
<comment type="catalytic activity">
    <reaction evidence="9">
        <text>L-seryl-[myosin light chain] + ATP = O-phospho-L-seryl-[myosin light chain] + ADP + H(+)</text>
        <dbReference type="Rhea" id="RHEA:22004"/>
        <dbReference type="Rhea" id="RHEA-COMP:13684"/>
        <dbReference type="Rhea" id="RHEA-COMP:13685"/>
        <dbReference type="ChEBI" id="CHEBI:15378"/>
        <dbReference type="ChEBI" id="CHEBI:29999"/>
        <dbReference type="ChEBI" id="CHEBI:30616"/>
        <dbReference type="ChEBI" id="CHEBI:83421"/>
        <dbReference type="ChEBI" id="CHEBI:456216"/>
        <dbReference type="EC" id="2.7.11.18"/>
    </reaction>
    <physiologicalReaction direction="left-to-right" evidence="9">
        <dbReference type="Rhea" id="RHEA:22005"/>
    </physiologicalReaction>
</comment>
<comment type="catalytic activity">
    <reaction evidence="9">
        <text>L-threonyl-[myosin light chain] + ATP = O-phospho-L-threonyl-[myosin light chain] + ADP + H(+)</text>
        <dbReference type="Rhea" id="RHEA:53900"/>
        <dbReference type="Rhea" id="RHEA-COMP:13686"/>
        <dbReference type="Rhea" id="RHEA-COMP:13687"/>
        <dbReference type="ChEBI" id="CHEBI:15378"/>
        <dbReference type="ChEBI" id="CHEBI:30013"/>
        <dbReference type="ChEBI" id="CHEBI:30616"/>
        <dbReference type="ChEBI" id="CHEBI:61977"/>
        <dbReference type="ChEBI" id="CHEBI:456216"/>
        <dbReference type="EC" id="2.7.11.18"/>
    </reaction>
    <physiologicalReaction direction="left-to-right" evidence="9">
        <dbReference type="Rhea" id="RHEA:53901"/>
    </physiologicalReaction>
</comment>
<comment type="subunit">
    <text evidence="1">May interact with centrin.</text>
</comment>
<comment type="subcellular location">
    <subcellularLocation>
        <location evidence="1">Cytoplasm</location>
    </subcellularLocation>
    <text evidence="1">Colocalizes with phosphorylated myosin light chain (RLCP) at filaments of the myofibrils.</text>
</comment>
<comment type="similarity">
    <text evidence="8">Belongs to the protein kinase superfamily. CAMK Ser/Thr protein kinase family.</text>
</comment>
<gene>
    <name type="primary">Mylk2</name>
</gene>
<reference key="1">
    <citation type="journal article" date="1988" name="J. Biol. Chem.">
        <title>Isolation of the cDNA encoding rat skeletal muscle myosin light chain kinase. Sequence and tissue distribution.</title>
        <authorList>
            <person name="Roush C.L."/>
            <person name="Kennelly P.J."/>
            <person name="Glaccum M.B."/>
            <person name="Helfman D.M."/>
            <person name="Scott J.D."/>
            <person name="Krebs E.G."/>
        </authorList>
    </citation>
    <scope>NUCLEOTIDE SEQUENCE [MRNA]</scope>
    <scope>CATALYTIC ACTIVITY</scope>
</reference>
<reference key="2">
    <citation type="journal article" date="1989" name="Am. J. Physiol.">
        <title>Molecular characterization of rat skeletal muscle myosin light chain kinase.</title>
        <authorList>
            <person name="Herring B.P."/>
            <person name="Nunnally M.H."/>
            <person name="Gallagher P.J."/>
            <person name="Stull J.T."/>
        </authorList>
    </citation>
    <scope>NUCLEOTIDE SEQUENCE [MRNA] OF 296-610</scope>
</reference>
<reference key="3">
    <citation type="journal article" date="2012" name="Nat. Commun.">
        <title>Quantitative maps of protein phosphorylation sites across 14 different rat organs and tissues.</title>
        <authorList>
            <person name="Lundby A."/>
            <person name="Secher A."/>
            <person name="Lage K."/>
            <person name="Nordsborg N.B."/>
            <person name="Dmytriyev A."/>
            <person name="Lundby C."/>
            <person name="Olsen J.V."/>
        </authorList>
    </citation>
    <scope>PHOSPHORYLATION [LARGE SCALE ANALYSIS] AT THR-459</scope>
    <scope>IDENTIFICATION BY MASS SPECTROMETRY [LARGE SCALE ANALYSIS]</scope>
</reference>